<evidence type="ECO:0000255" key="1">
    <source>
        <dbReference type="HAMAP-Rule" id="MF_01376"/>
    </source>
</evidence>
<evidence type="ECO:0000305" key="2"/>
<protein>
    <recommendedName>
        <fullName evidence="1">2-aminoethylphosphonate--pyruvate transaminase 1</fullName>
        <ecNumber evidence="1">2.6.1.37</ecNumber>
    </recommendedName>
    <alternativeName>
        <fullName evidence="1">2-aminoethylphosphonate aminotransferase 1</fullName>
    </alternativeName>
    <alternativeName>
        <fullName evidence="1">AEP transaminase 1</fullName>
        <shortName evidence="1">AEPT 1</shortName>
    </alternativeName>
</protein>
<comment type="function">
    <text evidence="1">Involved in phosphonate degradation.</text>
</comment>
<comment type="catalytic activity">
    <reaction evidence="1">
        <text>(2-aminoethyl)phosphonate + pyruvate = phosphonoacetaldehyde + L-alanine</text>
        <dbReference type="Rhea" id="RHEA:17021"/>
        <dbReference type="ChEBI" id="CHEBI:15361"/>
        <dbReference type="ChEBI" id="CHEBI:57418"/>
        <dbReference type="ChEBI" id="CHEBI:57972"/>
        <dbReference type="ChEBI" id="CHEBI:58383"/>
        <dbReference type="EC" id="2.6.1.37"/>
    </reaction>
</comment>
<comment type="cofactor">
    <cofactor evidence="1">
        <name>pyridoxal 5'-phosphate</name>
        <dbReference type="ChEBI" id="CHEBI:597326"/>
    </cofactor>
</comment>
<comment type="subunit">
    <text evidence="1">Homodimer.</text>
</comment>
<comment type="similarity">
    <text evidence="1">Belongs to the class-V pyridoxal-phosphate-dependent aminotransferase family. PhnW subfamily.</text>
</comment>
<comment type="sequence caution" evidence="2">
    <conflict type="erroneous initiation">
        <sequence resource="EMBL-CDS" id="ABE30852"/>
    </conflict>
</comment>
<reference key="1">
    <citation type="journal article" date="2006" name="Proc. Natl. Acad. Sci. U.S.A.">
        <title>Burkholderia xenovorans LB400 harbors a multi-replicon, 9.73-Mbp genome shaped for versatility.</title>
        <authorList>
            <person name="Chain P.S.G."/>
            <person name="Denef V.J."/>
            <person name="Konstantinidis K.T."/>
            <person name="Vergez L.M."/>
            <person name="Agullo L."/>
            <person name="Reyes V.L."/>
            <person name="Hauser L."/>
            <person name="Cordova M."/>
            <person name="Gomez L."/>
            <person name="Gonzalez M."/>
            <person name="Land M."/>
            <person name="Lao V."/>
            <person name="Larimer F."/>
            <person name="LiPuma J.J."/>
            <person name="Mahenthiralingam E."/>
            <person name="Malfatti S.A."/>
            <person name="Marx C.J."/>
            <person name="Parnell J.J."/>
            <person name="Ramette A."/>
            <person name="Richardson P."/>
            <person name="Seeger M."/>
            <person name="Smith D."/>
            <person name="Spilker T."/>
            <person name="Sul W.J."/>
            <person name="Tsoi T.V."/>
            <person name="Ulrich L.E."/>
            <person name="Zhulin I.B."/>
            <person name="Tiedje J.M."/>
        </authorList>
    </citation>
    <scope>NUCLEOTIDE SEQUENCE [LARGE SCALE GENOMIC DNA]</scope>
    <source>
        <strain>LB400</strain>
    </source>
</reference>
<accession>Q13YI7</accession>
<dbReference type="EC" id="2.6.1.37" evidence="1"/>
<dbReference type="EMBL" id="CP000270">
    <property type="protein sequence ID" value="ABE30852.1"/>
    <property type="status" value="ALT_INIT"/>
    <property type="molecule type" value="Genomic_DNA"/>
</dbReference>
<dbReference type="RefSeq" id="WP_011488466.1">
    <property type="nucleotide sequence ID" value="NZ_CP008760.1"/>
</dbReference>
<dbReference type="SMR" id="Q13YI7"/>
<dbReference type="STRING" id="266265.Bxe_A2116"/>
<dbReference type="KEGG" id="bxe:Bxe_A2116"/>
<dbReference type="eggNOG" id="COG0075">
    <property type="taxonomic scope" value="Bacteria"/>
</dbReference>
<dbReference type="OrthoDB" id="9766472at2"/>
<dbReference type="Proteomes" id="UP000001817">
    <property type="component" value="Chromosome 1"/>
</dbReference>
<dbReference type="GO" id="GO:0047304">
    <property type="term" value="F:2-aminoethylphosphonate-pyruvate transaminase activity"/>
    <property type="evidence" value="ECO:0007669"/>
    <property type="project" value="UniProtKB-UniRule"/>
</dbReference>
<dbReference type="GO" id="GO:0019700">
    <property type="term" value="P:organic phosphonate catabolic process"/>
    <property type="evidence" value="ECO:0007669"/>
    <property type="project" value="InterPro"/>
</dbReference>
<dbReference type="Gene3D" id="3.90.1150.10">
    <property type="entry name" value="Aspartate Aminotransferase, domain 1"/>
    <property type="match status" value="1"/>
</dbReference>
<dbReference type="Gene3D" id="3.40.640.10">
    <property type="entry name" value="Type I PLP-dependent aspartate aminotransferase-like (Major domain)"/>
    <property type="match status" value="1"/>
</dbReference>
<dbReference type="HAMAP" id="MF_01376">
    <property type="entry name" value="PhnW_aminotrans_5"/>
    <property type="match status" value="1"/>
</dbReference>
<dbReference type="InterPro" id="IPR000192">
    <property type="entry name" value="Aminotrans_V_dom"/>
</dbReference>
<dbReference type="InterPro" id="IPR012703">
    <property type="entry name" value="NH2EtPonate_pyrv_transaminase"/>
</dbReference>
<dbReference type="InterPro" id="IPR015424">
    <property type="entry name" value="PyrdxlP-dep_Trfase"/>
</dbReference>
<dbReference type="InterPro" id="IPR015421">
    <property type="entry name" value="PyrdxlP-dep_Trfase_major"/>
</dbReference>
<dbReference type="InterPro" id="IPR015422">
    <property type="entry name" value="PyrdxlP-dep_Trfase_small"/>
</dbReference>
<dbReference type="InterPro" id="IPR024169">
    <property type="entry name" value="SP_NH2Trfase/AEP_transaminase"/>
</dbReference>
<dbReference type="NCBIfam" id="TIGR03301">
    <property type="entry name" value="PhnW-AepZ"/>
    <property type="match status" value="1"/>
</dbReference>
<dbReference type="NCBIfam" id="NF010006">
    <property type="entry name" value="PRK13479.1"/>
    <property type="match status" value="1"/>
</dbReference>
<dbReference type="NCBIfam" id="TIGR02326">
    <property type="entry name" value="transamin_PhnW"/>
    <property type="match status" value="1"/>
</dbReference>
<dbReference type="PANTHER" id="PTHR42778">
    <property type="entry name" value="2-AMINOETHYLPHOSPHONATE--PYRUVATE TRANSAMINASE"/>
    <property type="match status" value="1"/>
</dbReference>
<dbReference type="PANTHER" id="PTHR42778:SF1">
    <property type="entry name" value="2-AMINOETHYLPHOSPHONATE--PYRUVATE TRANSAMINASE"/>
    <property type="match status" value="1"/>
</dbReference>
<dbReference type="Pfam" id="PF00266">
    <property type="entry name" value="Aminotran_5"/>
    <property type="match status" value="1"/>
</dbReference>
<dbReference type="PIRSF" id="PIRSF000524">
    <property type="entry name" value="SPT"/>
    <property type="match status" value="1"/>
</dbReference>
<dbReference type="SUPFAM" id="SSF53383">
    <property type="entry name" value="PLP-dependent transferases"/>
    <property type="match status" value="1"/>
</dbReference>
<proteinExistence type="inferred from homology"/>
<gene>
    <name evidence="1" type="primary">phnW1</name>
    <name type="ordered locus">Bxeno_A2314</name>
    <name type="ORF">Bxe_A2116</name>
</gene>
<feature type="chain" id="PRO_0000286768" description="2-aminoethylphosphonate--pyruvate transaminase 1">
    <location>
        <begin position="1"/>
        <end position="389"/>
    </location>
</feature>
<feature type="modified residue" description="N6-(pyridoxal phosphate)lysine" evidence="1">
    <location>
        <position position="196"/>
    </location>
</feature>
<organism>
    <name type="scientific">Paraburkholderia xenovorans (strain LB400)</name>
    <dbReference type="NCBI Taxonomy" id="266265"/>
    <lineage>
        <taxon>Bacteria</taxon>
        <taxon>Pseudomonadati</taxon>
        <taxon>Pseudomonadota</taxon>
        <taxon>Betaproteobacteria</taxon>
        <taxon>Burkholderiales</taxon>
        <taxon>Burkholderiaceae</taxon>
        <taxon>Paraburkholderia</taxon>
    </lineage>
</organism>
<sequence length="389" mass="42561">MQPRRGEPYLLTPGPLTTAFSTKEAMLRDWGSWDGDFRAMTALLRSSLLEIAGDTAGEYDCVPLQGSGSYCVEAMLGSLIPRDAHALVLANGAYGKRIVTTLGYLGRACTVLDKGDYLPPRGAEIERMLDDDPRITHVVAVHCETSSGILNPIEEIAAATAKKGRKLLIDSMSAFGAVPLDVREIACEAFVSSANKCIEGVPGFGFVIARKSALREAKGRSHSLALDVYDQWDVMNRTGQWRFTPPTHAVAAFIEALRLFRLEGGQVGRLARYANNRDVLVAGMRELGFEPLLNARWRSPVIVTFFAPAHPSFRFETFYELMKQQGFIIYPGKLTVVDSFRIGCIGQVDEHVMRRVVEACANSLRTMGVGHAAPPAAALEERRTLAEAA</sequence>
<name>PHNW1_PARXL</name>
<keyword id="KW-0032">Aminotransferase</keyword>
<keyword id="KW-0663">Pyridoxal phosphate</keyword>
<keyword id="KW-0670">Pyruvate</keyword>
<keyword id="KW-1185">Reference proteome</keyword>
<keyword id="KW-0808">Transferase</keyword>